<reference key="1">
    <citation type="journal article" date="2005" name="J. Bacteriol.">
        <title>Completion of the genome sequence of Brucella abortus and comparison to the highly similar genomes of Brucella melitensis and Brucella suis.</title>
        <authorList>
            <person name="Halling S.M."/>
            <person name="Peterson-Burch B.D."/>
            <person name="Bricker B.J."/>
            <person name="Zuerner R.L."/>
            <person name="Qing Z."/>
            <person name="Li L.-L."/>
            <person name="Kapur V."/>
            <person name="Alt D.P."/>
            <person name="Olsen S.C."/>
        </authorList>
    </citation>
    <scope>NUCLEOTIDE SEQUENCE [LARGE SCALE GENOMIC DNA]</scope>
    <source>
        <strain>9-941</strain>
    </source>
</reference>
<sequence>MKNLFRTAALMVPLSLALAYGAQAKEIPIGKPQLLGGMEIAAVYLQPIEMEPEGMMRPAKDSDVHLEADIKAAKDNTNGFAEGDWVPYLVVSYELTHLDNGKVQKGDFMPMVANDGPHYGDNVKLDGPGKYKLKLFVSPPSANQHAHFGRHVDKETGVGPWFKPVTAEYEFVYAGTGKKGAY</sequence>
<dbReference type="EMBL" id="AE017224">
    <property type="protein sequence ID" value="AAX76213.1"/>
    <property type="molecule type" value="Genomic_DNA"/>
</dbReference>
<dbReference type="RefSeq" id="WP_002966226.1">
    <property type="nucleotide sequence ID" value="NC_006933.1"/>
</dbReference>
<dbReference type="SMR" id="Q577H1"/>
<dbReference type="EnsemblBacteria" id="AAX76213">
    <property type="protein sequence ID" value="AAX76213"/>
    <property type="gene ID" value="BruAb2_0820"/>
</dbReference>
<dbReference type="KEGG" id="bmb:BruAb2_0820"/>
<dbReference type="HOGENOM" id="CLU_100963_1_0_5"/>
<dbReference type="Proteomes" id="UP000000540">
    <property type="component" value="Chromosome II"/>
</dbReference>
<dbReference type="Gene3D" id="2.60.40.2480">
    <property type="entry name" value="Periplasmic metal-binding protein Tp34-type"/>
    <property type="match status" value="1"/>
</dbReference>
<dbReference type="InterPro" id="IPR018470">
    <property type="entry name" value="Metal-bd_Tp34-typ"/>
</dbReference>
<dbReference type="InterPro" id="IPR038482">
    <property type="entry name" value="Tp34-type_sf"/>
</dbReference>
<dbReference type="Pfam" id="PF10634">
    <property type="entry name" value="Iron_transport"/>
    <property type="match status" value="1"/>
</dbReference>
<dbReference type="PIRSF" id="PIRSF017018">
    <property type="entry name" value="Tp34"/>
    <property type="match status" value="1"/>
</dbReference>
<protein>
    <recommendedName>
        <fullName>UPF0423 protein BruAb2_0820</fullName>
    </recommendedName>
</protein>
<proteinExistence type="inferred from homology"/>
<organism>
    <name type="scientific">Brucella abortus biovar 1 (strain 9-941)</name>
    <dbReference type="NCBI Taxonomy" id="262698"/>
    <lineage>
        <taxon>Bacteria</taxon>
        <taxon>Pseudomonadati</taxon>
        <taxon>Pseudomonadota</taxon>
        <taxon>Alphaproteobacteria</taxon>
        <taxon>Hyphomicrobiales</taxon>
        <taxon>Brucellaceae</taxon>
        <taxon>Brucella/Ochrobactrum group</taxon>
        <taxon>Brucella</taxon>
    </lineage>
</organism>
<keyword id="KW-0732">Signal</keyword>
<comment type="similarity">
    <text evidence="2">Belongs to the UPF0423 family.</text>
</comment>
<gene>
    <name type="ordered locus">BruAb2_0820</name>
</gene>
<feature type="signal peptide" evidence="1">
    <location>
        <begin position="1"/>
        <end position="24"/>
    </location>
</feature>
<feature type="chain" id="PRO_0000284479" description="UPF0423 protein BruAb2_0820">
    <location>
        <begin position="25"/>
        <end position="182"/>
    </location>
</feature>
<accession>Q577H1</accession>
<evidence type="ECO:0000255" key="1"/>
<evidence type="ECO:0000305" key="2"/>
<name>Y820_BRUAB</name>